<name>HIS6_LEPBA</name>
<sequence length="255" mass="27751">MDELTKRVIPCLDIKGGRVVKGVQFVNLIDAGDPVSCAVAYEENKADELCFLDITASSDKRDILLHLVEEVANKLFIPFTVGGGIRTIEDVKAVLNKGADKVSINTSAFQNPKLLKDASEIYGSQCIVCAIDVKFHPERKRYEVYLNGGRAETGREALDWGKEAHEMGAGEILLTSMDKDGTKDGFDINLMKSFTSNLTIPIIASGGAGNPEHMAEVILRGGADAVLAASIFHFGEFSIQETKQTMKEMGIKVRL</sequence>
<feature type="chain" id="PRO_1000190576" description="Imidazole glycerol phosphate synthase subunit HisF">
    <location>
        <begin position="1"/>
        <end position="255"/>
    </location>
</feature>
<feature type="active site" evidence="1">
    <location>
        <position position="13"/>
    </location>
</feature>
<feature type="active site" evidence="1">
    <location>
        <position position="132"/>
    </location>
</feature>
<protein>
    <recommendedName>
        <fullName evidence="1">Imidazole glycerol phosphate synthase subunit HisF</fullName>
        <ecNumber evidence="1">4.3.2.10</ecNumber>
    </recommendedName>
    <alternativeName>
        <fullName evidence="1">IGP synthase cyclase subunit</fullName>
    </alternativeName>
    <alternativeName>
        <fullName evidence="1">IGP synthase subunit HisF</fullName>
    </alternativeName>
    <alternativeName>
        <fullName evidence="1">ImGP synthase subunit HisF</fullName>
        <shortName evidence="1">IGPS subunit HisF</shortName>
    </alternativeName>
</protein>
<accession>B0S8V2</accession>
<reference key="1">
    <citation type="journal article" date="2008" name="PLoS ONE">
        <title>Genome sequence of the saprophyte Leptospira biflexa provides insights into the evolution of Leptospira and the pathogenesis of leptospirosis.</title>
        <authorList>
            <person name="Picardeau M."/>
            <person name="Bulach D.M."/>
            <person name="Bouchier C."/>
            <person name="Zuerner R.L."/>
            <person name="Zidane N."/>
            <person name="Wilson P.J."/>
            <person name="Creno S."/>
            <person name="Kuczek E.S."/>
            <person name="Bommezzadri S."/>
            <person name="Davis J.C."/>
            <person name="McGrath A."/>
            <person name="Johnson M.J."/>
            <person name="Boursaux-Eude C."/>
            <person name="Seemann T."/>
            <person name="Rouy Z."/>
            <person name="Coppel R.L."/>
            <person name="Rood J.I."/>
            <person name="Lajus A."/>
            <person name="Davies J.K."/>
            <person name="Medigue C."/>
            <person name="Adler B."/>
        </authorList>
    </citation>
    <scope>NUCLEOTIDE SEQUENCE [LARGE SCALE GENOMIC DNA]</scope>
    <source>
        <strain>Patoc 1 / Ames</strain>
    </source>
</reference>
<proteinExistence type="inferred from homology"/>
<comment type="function">
    <text evidence="1">IGPS catalyzes the conversion of PRFAR and glutamine to IGP, AICAR and glutamate. The HisF subunit catalyzes the cyclization activity that produces IGP and AICAR from PRFAR using the ammonia provided by the HisH subunit.</text>
</comment>
<comment type="catalytic activity">
    <reaction evidence="1">
        <text>5-[(5-phospho-1-deoxy-D-ribulos-1-ylimino)methylamino]-1-(5-phospho-beta-D-ribosyl)imidazole-4-carboxamide + L-glutamine = D-erythro-1-(imidazol-4-yl)glycerol 3-phosphate + 5-amino-1-(5-phospho-beta-D-ribosyl)imidazole-4-carboxamide + L-glutamate + H(+)</text>
        <dbReference type="Rhea" id="RHEA:24793"/>
        <dbReference type="ChEBI" id="CHEBI:15378"/>
        <dbReference type="ChEBI" id="CHEBI:29985"/>
        <dbReference type="ChEBI" id="CHEBI:58278"/>
        <dbReference type="ChEBI" id="CHEBI:58359"/>
        <dbReference type="ChEBI" id="CHEBI:58475"/>
        <dbReference type="ChEBI" id="CHEBI:58525"/>
        <dbReference type="EC" id="4.3.2.10"/>
    </reaction>
</comment>
<comment type="pathway">
    <text evidence="1">Amino-acid biosynthesis; L-histidine biosynthesis; L-histidine from 5-phospho-alpha-D-ribose 1-diphosphate: step 5/9.</text>
</comment>
<comment type="subunit">
    <text evidence="1">Heterodimer of HisH and HisF.</text>
</comment>
<comment type="subcellular location">
    <subcellularLocation>
        <location evidence="1">Cytoplasm</location>
    </subcellularLocation>
</comment>
<comment type="similarity">
    <text evidence="1">Belongs to the HisA/HisF family.</text>
</comment>
<gene>
    <name evidence="1" type="primary">hisF</name>
    <name type="ordered locus">LBF_1676</name>
</gene>
<evidence type="ECO:0000255" key="1">
    <source>
        <dbReference type="HAMAP-Rule" id="MF_01013"/>
    </source>
</evidence>
<organism>
    <name type="scientific">Leptospira biflexa serovar Patoc (strain Patoc 1 / Ames)</name>
    <dbReference type="NCBI Taxonomy" id="355278"/>
    <lineage>
        <taxon>Bacteria</taxon>
        <taxon>Pseudomonadati</taxon>
        <taxon>Spirochaetota</taxon>
        <taxon>Spirochaetia</taxon>
        <taxon>Leptospirales</taxon>
        <taxon>Leptospiraceae</taxon>
        <taxon>Leptospira</taxon>
    </lineage>
</organism>
<keyword id="KW-0028">Amino-acid biosynthesis</keyword>
<keyword id="KW-0963">Cytoplasm</keyword>
<keyword id="KW-0368">Histidine biosynthesis</keyword>
<keyword id="KW-0456">Lyase</keyword>
<dbReference type="EC" id="4.3.2.10" evidence="1"/>
<dbReference type="EMBL" id="CP000777">
    <property type="protein sequence ID" value="ABZ94183.1"/>
    <property type="molecule type" value="Genomic_DNA"/>
</dbReference>
<dbReference type="RefSeq" id="WP_012388713.1">
    <property type="nucleotide sequence ID" value="NC_010842.1"/>
</dbReference>
<dbReference type="SMR" id="B0S8V2"/>
<dbReference type="KEGG" id="lbf:LBF_1676"/>
<dbReference type="HOGENOM" id="CLU_048577_4_0_12"/>
<dbReference type="UniPathway" id="UPA00031">
    <property type="reaction ID" value="UER00010"/>
</dbReference>
<dbReference type="GO" id="GO:0005737">
    <property type="term" value="C:cytoplasm"/>
    <property type="evidence" value="ECO:0007669"/>
    <property type="project" value="UniProtKB-SubCell"/>
</dbReference>
<dbReference type="GO" id="GO:0000107">
    <property type="term" value="F:imidazoleglycerol-phosphate synthase activity"/>
    <property type="evidence" value="ECO:0007669"/>
    <property type="project" value="UniProtKB-UniRule"/>
</dbReference>
<dbReference type="GO" id="GO:0016829">
    <property type="term" value="F:lyase activity"/>
    <property type="evidence" value="ECO:0007669"/>
    <property type="project" value="UniProtKB-KW"/>
</dbReference>
<dbReference type="GO" id="GO:0000105">
    <property type="term" value="P:L-histidine biosynthetic process"/>
    <property type="evidence" value="ECO:0007669"/>
    <property type="project" value="UniProtKB-UniRule"/>
</dbReference>
<dbReference type="CDD" id="cd04731">
    <property type="entry name" value="HisF"/>
    <property type="match status" value="1"/>
</dbReference>
<dbReference type="FunFam" id="3.20.20.70:FF:000006">
    <property type="entry name" value="Imidazole glycerol phosphate synthase subunit HisF"/>
    <property type="match status" value="1"/>
</dbReference>
<dbReference type="Gene3D" id="3.20.20.70">
    <property type="entry name" value="Aldolase class I"/>
    <property type="match status" value="1"/>
</dbReference>
<dbReference type="HAMAP" id="MF_01013">
    <property type="entry name" value="HisF"/>
    <property type="match status" value="1"/>
</dbReference>
<dbReference type="InterPro" id="IPR013785">
    <property type="entry name" value="Aldolase_TIM"/>
</dbReference>
<dbReference type="InterPro" id="IPR006062">
    <property type="entry name" value="His_biosynth"/>
</dbReference>
<dbReference type="InterPro" id="IPR004651">
    <property type="entry name" value="HisF"/>
</dbReference>
<dbReference type="InterPro" id="IPR050064">
    <property type="entry name" value="IGPS_HisA/HisF"/>
</dbReference>
<dbReference type="InterPro" id="IPR011060">
    <property type="entry name" value="RibuloseP-bd_barrel"/>
</dbReference>
<dbReference type="NCBIfam" id="TIGR00735">
    <property type="entry name" value="hisF"/>
    <property type="match status" value="1"/>
</dbReference>
<dbReference type="PANTHER" id="PTHR21235:SF2">
    <property type="entry name" value="IMIDAZOLE GLYCEROL PHOSPHATE SYNTHASE HISHF"/>
    <property type="match status" value="1"/>
</dbReference>
<dbReference type="PANTHER" id="PTHR21235">
    <property type="entry name" value="IMIDAZOLE GLYCEROL PHOSPHATE SYNTHASE SUBUNIT HISF/H IGP SYNTHASE SUBUNIT HISF/H"/>
    <property type="match status" value="1"/>
</dbReference>
<dbReference type="Pfam" id="PF00977">
    <property type="entry name" value="His_biosynth"/>
    <property type="match status" value="1"/>
</dbReference>
<dbReference type="SUPFAM" id="SSF51366">
    <property type="entry name" value="Ribulose-phoshate binding barrel"/>
    <property type="match status" value="1"/>
</dbReference>